<organism>
    <name type="scientific">Rhizobium tropici</name>
    <dbReference type="NCBI Taxonomy" id="398"/>
    <lineage>
        <taxon>Bacteria</taxon>
        <taxon>Pseudomonadati</taxon>
        <taxon>Pseudomonadota</taxon>
        <taxon>Alphaproteobacteria</taxon>
        <taxon>Hyphomicrobiales</taxon>
        <taxon>Rhizobiaceae</taxon>
        <taxon>Rhizobium/Agrobacterium group</taxon>
        <taxon>Rhizobium</taxon>
    </lineage>
</organism>
<comment type="function">
    <text>NodD regulates the expression of the nodABCFE genes which encode other nodulation proteins. NodD is also a negative regulator of its own expression. Binds flavonoids as inducers.</text>
</comment>
<comment type="similarity">
    <text evidence="2">Belongs to the LysR transcriptional regulatory family.</text>
</comment>
<proteinExistence type="inferred from homology"/>
<accession>P32008</accession>
<sequence>MRFKGLDLNLLVVLDALMTERNLTAAARSINLSQPAMSAAVARLRTNFRDDLFAMAGREFIPTPRAEGLAPAVRDALLQIQLSIVSWEPFNPAQSDRRFRIVLSDYVTLVFFEKVVARAAQEAPGISFDCLPLADDFEELLRRGDIDFLIMPELFMSMHPHAALFEDKFVCVGCRTNEQLSEPFTFERYMSMGHVAVKFGNTRRPTIEEWYLLEHGLKRRIEVVVQGFSMIPPMLSGTERIGTMPLRLAQHFAKTIPLRIVELPLPIPPLAEAVQWPALHNSDPASLWMRELLLQEASLMVSPRAPVRLSAPGF</sequence>
<feature type="chain" id="PRO_0000105724" description="Nodulation protein D 2">
    <location>
        <begin position="1"/>
        <end position="314"/>
    </location>
</feature>
<feature type="domain" description="HTH lysR-type" evidence="1">
    <location>
        <begin position="6"/>
        <end position="63"/>
    </location>
</feature>
<feature type="DNA-binding region" description="H-T-H motif" evidence="1">
    <location>
        <begin position="23"/>
        <end position="42"/>
    </location>
</feature>
<gene>
    <name type="primary">nodD2</name>
</gene>
<keyword id="KW-0010">Activator</keyword>
<keyword id="KW-0238">DNA-binding</keyword>
<keyword id="KW-0536">Nodulation</keyword>
<keyword id="KW-0678">Repressor</keyword>
<keyword id="KW-0804">Transcription</keyword>
<keyword id="KW-0805">Transcription regulation</keyword>
<evidence type="ECO:0000255" key="1">
    <source>
        <dbReference type="PROSITE-ProRule" id="PRU00253"/>
    </source>
</evidence>
<evidence type="ECO:0000305" key="2"/>
<reference key="1">
    <citation type="journal article" date="1993" name="J. Bacteriol.">
        <title>Multiple copies of nodD in Rhizobium tropici CIAT899 and BR816.</title>
        <authorList>
            <person name="van Rhijn P.J."/>
            <person name="Feys B."/>
            <person name="Vanderleyden J."/>
        </authorList>
    </citation>
    <scope>NUCLEOTIDE SEQUENCE [GENOMIC DNA]</scope>
</reference>
<protein>
    <recommendedName>
        <fullName>Nodulation protein D 2</fullName>
    </recommendedName>
</protein>
<name>NODD2_RHITR</name>
<dbReference type="EMBL" id="U26451">
    <property type="protein sequence ID" value="AAA26338.1"/>
    <property type="molecule type" value="Genomic_DNA"/>
</dbReference>
<dbReference type="PIR" id="B40642">
    <property type="entry name" value="B40642"/>
</dbReference>
<dbReference type="SMR" id="P32008"/>
<dbReference type="GO" id="GO:0003677">
    <property type="term" value="F:DNA binding"/>
    <property type="evidence" value="ECO:0007669"/>
    <property type="project" value="UniProtKB-KW"/>
</dbReference>
<dbReference type="GO" id="GO:0003700">
    <property type="term" value="F:DNA-binding transcription factor activity"/>
    <property type="evidence" value="ECO:0007669"/>
    <property type="project" value="InterPro"/>
</dbReference>
<dbReference type="CDD" id="cd08462">
    <property type="entry name" value="PBP2_NodD"/>
    <property type="match status" value="1"/>
</dbReference>
<dbReference type="Gene3D" id="3.40.190.10">
    <property type="entry name" value="Periplasmic binding protein-like II"/>
    <property type="match status" value="2"/>
</dbReference>
<dbReference type="Gene3D" id="1.10.10.10">
    <property type="entry name" value="Winged helix-like DNA-binding domain superfamily/Winged helix DNA-binding domain"/>
    <property type="match status" value="1"/>
</dbReference>
<dbReference type="InterPro" id="IPR050389">
    <property type="entry name" value="LysR-type_TF"/>
</dbReference>
<dbReference type="InterPro" id="IPR005119">
    <property type="entry name" value="LysR_subst-bd"/>
</dbReference>
<dbReference type="InterPro" id="IPR037416">
    <property type="entry name" value="NodD_PBP2"/>
</dbReference>
<dbReference type="InterPro" id="IPR000847">
    <property type="entry name" value="Tscrpt_reg_HTH_LysR"/>
</dbReference>
<dbReference type="InterPro" id="IPR036388">
    <property type="entry name" value="WH-like_DNA-bd_sf"/>
</dbReference>
<dbReference type="InterPro" id="IPR036390">
    <property type="entry name" value="WH_DNA-bd_sf"/>
</dbReference>
<dbReference type="PANTHER" id="PTHR30118:SF6">
    <property type="entry name" value="HTH-TYPE TRANSCRIPTIONAL REGULATOR LEUO"/>
    <property type="match status" value="1"/>
</dbReference>
<dbReference type="PANTHER" id="PTHR30118">
    <property type="entry name" value="HTH-TYPE TRANSCRIPTIONAL REGULATOR LEUO-RELATED"/>
    <property type="match status" value="1"/>
</dbReference>
<dbReference type="Pfam" id="PF00126">
    <property type="entry name" value="HTH_1"/>
    <property type="match status" value="1"/>
</dbReference>
<dbReference type="Pfam" id="PF03466">
    <property type="entry name" value="LysR_substrate"/>
    <property type="match status" value="1"/>
</dbReference>
<dbReference type="PRINTS" id="PR00039">
    <property type="entry name" value="HTHLYSR"/>
</dbReference>
<dbReference type="SUPFAM" id="SSF53850">
    <property type="entry name" value="Periplasmic binding protein-like II"/>
    <property type="match status" value="1"/>
</dbReference>
<dbReference type="SUPFAM" id="SSF46785">
    <property type="entry name" value="Winged helix' DNA-binding domain"/>
    <property type="match status" value="1"/>
</dbReference>
<dbReference type="PROSITE" id="PS50931">
    <property type="entry name" value="HTH_LYSR"/>
    <property type="match status" value="1"/>
</dbReference>